<reference key="1">
    <citation type="journal article" date="2003" name="Mol. Microbiol.">
        <title>An integrated analysis of the genome of the hyperthermophilic archaeon Pyrococcus abyssi.</title>
        <authorList>
            <person name="Cohen G.N."/>
            <person name="Barbe V."/>
            <person name="Flament D."/>
            <person name="Galperin M."/>
            <person name="Heilig R."/>
            <person name="Lecompte O."/>
            <person name="Poch O."/>
            <person name="Prieur D."/>
            <person name="Querellou J."/>
            <person name="Ripp R."/>
            <person name="Thierry J.-C."/>
            <person name="Van der Oost J."/>
            <person name="Weissenbach J."/>
            <person name="Zivanovic Y."/>
            <person name="Forterre P."/>
        </authorList>
    </citation>
    <scope>NUCLEOTIDE SEQUENCE [LARGE SCALE GENOMIC DNA]</scope>
    <source>
        <strain>GE5 / Orsay</strain>
    </source>
</reference>
<reference key="2">
    <citation type="journal article" date="2012" name="Curr. Microbiol.">
        <title>Re-annotation of two hyperthermophilic archaea Pyrococcus abyssi GE5 and Pyrococcus furiosus DSM 3638.</title>
        <authorList>
            <person name="Gao J."/>
            <person name="Wang J."/>
        </authorList>
    </citation>
    <scope>GENOME REANNOTATION</scope>
    <source>
        <strain>GE5 / Orsay</strain>
    </source>
</reference>
<organism>
    <name type="scientific">Pyrococcus abyssi (strain GE5 / Orsay)</name>
    <dbReference type="NCBI Taxonomy" id="272844"/>
    <lineage>
        <taxon>Archaea</taxon>
        <taxon>Methanobacteriati</taxon>
        <taxon>Methanobacteriota</taxon>
        <taxon>Thermococci</taxon>
        <taxon>Thermococcales</taxon>
        <taxon>Thermococcaceae</taxon>
        <taxon>Pyrococcus</taxon>
    </lineage>
</organism>
<name>UPPS_PYRAB</name>
<protein>
    <recommendedName>
        <fullName evidence="1">Tritrans,polycis-undecaprenyl-diphosphate synthase (geranylgeranyl-diphosphate specific)</fullName>
        <ecNumber evidence="1">2.5.1.89</ecNumber>
    </recommendedName>
    <alternativeName>
        <fullName evidence="1">Undecaprenyl diphosphate synthase</fullName>
        <shortName evidence="1">UDS</shortName>
    </alternativeName>
    <alternativeName>
        <fullName evidence="1">Undecaprenyl pyrophosphate synthase</fullName>
        <shortName evidence="1">UPP synthase</shortName>
    </alternativeName>
</protein>
<feature type="chain" id="PRO_0000123736" description="Tritrans,polycis-undecaprenyl-diphosphate synthase (geranylgeranyl-diphosphate specific)">
    <location>
        <begin position="1"/>
        <end position="264"/>
    </location>
</feature>
<feature type="active site" evidence="1">
    <location>
        <position position="43"/>
    </location>
</feature>
<feature type="active site" description="Proton acceptor" evidence="1">
    <location>
        <position position="91"/>
    </location>
</feature>
<feature type="binding site" evidence="1">
    <location>
        <position position="43"/>
    </location>
    <ligand>
        <name>Mg(2+)</name>
        <dbReference type="ChEBI" id="CHEBI:18420"/>
    </ligand>
</feature>
<feature type="binding site" evidence="1">
    <location>
        <begin position="44"/>
        <end position="47"/>
    </location>
    <ligand>
        <name>substrate</name>
    </ligand>
</feature>
<feature type="binding site" evidence="1">
    <location>
        <position position="48"/>
    </location>
    <ligand>
        <name>substrate</name>
    </ligand>
</feature>
<feature type="binding site" evidence="1">
    <location>
        <position position="60"/>
    </location>
    <ligand>
        <name>substrate</name>
    </ligand>
</feature>
<feature type="binding site" evidence="1">
    <location>
        <begin position="88"/>
        <end position="90"/>
    </location>
    <ligand>
        <name>substrate</name>
    </ligand>
</feature>
<feature type="binding site" evidence="1">
    <location>
        <position position="92"/>
    </location>
    <ligand>
        <name>substrate</name>
    </ligand>
</feature>
<feature type="binding site" evidence="1">
    <location>
        <position position="94"/>
    </location>
    <ligand>
        <name>substrate</name>
    </ligand>
</feature>
<feature type="binding site" evidence="1">
    <location>
        <position position="213"/>
    </location>
    <ligand>
        <name>substrate</name>
    </ligand>
</feature>
<feature type="binding site" evidence="1">
    <location>
        <begin position="219"/>
        <end position="221"/>
    </location>
    <ligand>
        <name>substrate</name>
    </ligand>
</feature>
<feature type="binding site" evidence="1">
    <location>
        <position position="232"/>
    </location>
    <ligand>
        <name>Mg(2+)</name>
        <dbReference type="ChEBI" id="CHEBI:18420"/>
    </ligand>
</feature>
<comment type="function">
    <text evidence="1">Catalyzes the sequential condensation of isopentenyl diphosphate (IPP) with geranylgeranyl diphosphate (GGPP) to yield (2Z,6Z,10Z,14Z,18Z,22Z,26Z,30E,34E,38E)-undecaprenyl diphosphate (tritrans,heptacis-UPP). It is probably the precursor of glycosyl carrier lipids.</text>
</comment>
<comment type="catalytic activity">
    <reaction evidence="1">
        <text>geranylgeranyl diphosphate + 7 isopentenyl diphosphate = tri-trans,hepta-cis-undecaprenyl diphosphate + 7 diphosphate</text>
        <dbReference type="Rhea" id="RHEA:27622"/>
        <dbReference type="ChEBI" id="CHEBI:33019"/>
        <dbReference type="ChEBI" id="CHEBI:57533"/>
        <dbReference type="ChEBI" id="CHEBI:60388"/>
        <dbReference type="ChEBI" id="CHEBI:128769"/>
        <dbReference type="EC" id="2.5.1.89"/>
    </reaction>
</comment>
<comment type="cofactor">
    <cofactor evidence="1">
        <name>Mg(2+)</name>
        <dbReference type="ChEBI" id="CHEBI:18420"/>
    </cofactor>
    <text evidence="1">Binds 2 magnesium ions per subunit.</text>
</comment>
<comment type="subunit">
    <text evidence="1">Homodimer.</text>
</comment>
<comment type="similarity">
    <text evidence="1">Belongs to the UPP synthase family.</text>
</comment>
<accession>Q9V157</accession>
<accession>G8ZJ37</accession>
<dbReference type="EC" id="2.5.1.89" evidence="1"/>
<dbReference type="EMBL" id="AJ248284">
    <property type="protein sequence ID" value="CAB49494.1"/>
    <property type="molecule type" value="Genomic_DNA"/>
</dbReference>
<dbReference type="EMBL" id="HE613800">
    <property type="protein sequence ID" value="CCE69964.1"/>
    <property type="molecule type" value="Genomic_DNA"/>
</dbReference>
<dbReference type="PIR" id="G75176">
    <property type="entry name" value="G75176"/>
</dbReference>
<dbReference type="RefSeq" id="WP_010867696.1">
    <property type="nucleotide sequence ID" value="NC_000868.1"/>
</dbReference>
<dbReference type="SMR" id="Q9V157"/>
<dbReference type="STRING" id="272844.PAB0394"/>
<dbReference type="KEGG" id="pab:PAB0394"/>
<dbReference type="PATRIC" id="fig|272844.11.peg.610"/>
<dbReference type="eggNOG" id="arCOG01532">
    <property type="taxonomic scope" value="Archaea"/>
</dbReference>
<dbReference type="HOGENOM" id="CLU_038505_2_0_2"/>
<dbReference type="OrthoDB" id="8293at2157"/>
<dbReference type="PhylomeDB" id="Q9V157"/>
<dbReference type="Proteomes" id="UP000000810">
    <property type="component" value="Chromosome"/>
</dbReference>
<dbReference type="Proteomes" id="UP000009139">
    <property type="component" value="Chromosome"/>
</dbReference>
<dbReference type="GO" id="GO:0045547">
    <property type="term" value="F:ditrans,polycis-polyprenyl diphosphate synthase [(2E,6E)-farnesyl diphosphate specific] activity"/>
    <property type="evidence" value="ECO:0007669"/>
    <property type="project" value="TreeGrafter"/>
</dbReference>
<dbReference type="GO" id="GO:0000287">
    <property type="term" value="F:magnesium ion binding"/>
    <property type="evidence" value="ECO:0007669"/>
    <property type="project" value="UniProtKB-UniRule"/>
</dbReference>
<dbReference type="GO" id="GO:0016094">
    <property type="term" value="P:polyprenol biosynthetic process"/>
    <property type="evidence" value="ECO:0007669"/>
    <property type="project" value="TreeGrafter"/>
</dbReference>
<dbReference type="CDD" id="cd00475">
    <property type="entry name" value="Cis_IPPS"/>
    <property type="match status" value="1"/>
</dbReference>
<dbReference type="FunFam" id="3.40.1180.10:FF:000003">
    <property type="entry name" value="Isoprenyl transferase 2"/>
    <property type="match status" value="1"/>
</dbReference>
<dbReference type="Gene3D" id="3.40.1180.10">
    <property type="entry name" value="Decaprenyl diphosphate synthase-like"/>
    <property type="match status" value="1"/>
</dbReference>
<dbReference type="HAMAP" id="MF_01139">
    <property type="entry name" value="ISPT"/>
    <property type="match status" value="1"/>
</dbReference>
<dbReference type="InterPro" id="IPR001441">
    <property type="entry name" value="UPP_synth-like"/>
</dbReference>
<dbReference type="InterPro" id="IPR018520">
    <property type="entry name" value="UPP_synth-like_CS"/>
</dbReference>
<dbReference type="InterPro" id="IPR036424">
    <property type="entry name" value="UPP_synth-like_sf"/>
</dbReference>
<dbReference type="NCBIfam" id="TIGR00055">
    <property type="entry name" value="uppS"/>
    <property type="match status" value="1"/>
</dbReference>
<dbReference type="PANTHER" id="PTHR10291:SF43">
    <property type="entry name" value="DEHYDRODOLICHYL DIPHOSPHATE SYNTHASE COMPLEX SUBUNIT DHDDS"/>
    <property type="match status" value="1"/>
</dbReference>
<dbReference type="PANTHER" id="PTHR10291">
    <property type="entry name" value="DEHYDRODOLICHYL DIPHOSPHATE SYNTHASE FAMILY MEMBER"/>
    <property type="match status" value="1"/>
</dbReference>
<dbReference type="Pfam" id="PF01255">
    <property type="entry name" value="Prenyltransf"/>
    <property type="match status" value="1"/>
</dbReference>
<dbReference type="SUPFAM" id="SSF64005">
    <property type="entry name" value="Undecaprenyl diphosphate synthase"/>
    <property type="match status" value="1"/>
</dbReference>
<dbReference type="PROSITE" id="PS01066">
    <property type="entry name" value="UPP_SYNTHASE"/>
    <property type="match status" value="1"/>
</dbReference>
<gene>
    <name evidence="1" type="primary">uppS</name>
    <name type="ordered locus">PYRAB05720</name>
    <name type="ORF">PAB0394</name>
</gene>
<sequence>MIYGILSHVPKIFFKPAYDLYERYLLEKVKAGVLPKHVAIIMDGNRRWAKKREKPPWYGHLFGSKKLEEILEWCHELGIRILTVYAFSTENFKRSKEEVERLMQLFEQKFRELVTDKRVHEYGVRVNVIGRKELLPKSVRDAAEEAERATRKYNNYVLNVAIAYGGRSEIVDAVKDIVRDVMDGKLRVEDIDEELLKKYLYVPNMPDPDIVIRTGGEVRISNFLLYQIAYSELFFVDVYFPEFRKIDFLRIIREFQKRERRFGR</sequence>
<proteinExistence type="inferred from homology"/>
<evidence type="ECO:0000255" key="1">
    <source>
        <dbReference type="HAMAP-Rule" id="MF_01139"/>
    </source>
</evidence>
<keyword id="KW-0460">Magnesium</keyword>
<keyword id="KW-0479">Metal-binding</keyword>
<keyword id="KW-0808">Transferase</keyword>